<dbReference type="EMBL" id="AE017180">
    <property type="protein sequence ID" value="AAR33360.1"/>
    <property type="molecule type" value="Genomic_DNA"/>
</dbReference>
<dbReference type="RefSeq" id="NP_951087.1">
    <property type="nucleotide sequence ID" value="NC_002939.5"/>
</dbReference>
<dbReference type="RefSeq" id="WP_010940703.1">
    <property type="nucleotide sequence ID" value="NC_002939.5"/>
</dbReference>
<dbReference type="SMR" id="Q74H67"/>
<dbReference type="STRING" id="243231.GSU0025"/>
<dbReference type="DNASU" id="2688562"/>
<dbReference type="EnsemblBacteria" id="AAR33360">
    <property type="protein sequence ID" value="AAR33360"/>
    <property type="gene ID" value="GSU0025"/>
</dbReference>
<dbReference type="KEGG" id="gsu:GSU0025"/>
<dbReference type="PATRIC" id="fig|243231.5.peg.26"/>
<dbReference type="eggNOG" id="COG0823">
    <property type="taxonomic scope" value="Bacteria"/>
</dbReference>
<dbReference type="HOGENOM" id="CLU_047123_2_0_7"/>
<dbReference type="InParanoid" id="Q74H67"/>
<dbReference type="OrthoDB" id="9815657at2"/>
<dbReference type="Proteomes" id="UP000000577">
    <property type="component" value="Chromosome"/>
</dbReference>
<dbReference type="GO" id="GO:0042597">
    <property type="term" value="C:periplasmic space"/>
    <property type="evidence" value="ECO:0007669"/>
    <property type="project" value="UniProtKB-SubCell"/>
</dbReference>
<dbReference type="GO" id="GO:0051301">
    <property type="term" value="P:cell division"/>
    <property type="evidence" value="ECO:0007669"/>
    <property type="project" value="UniProtKB-KW"/>
</dbReference>
<dbReference type="GO" id="GO:0017038">
    <property type="term" value="P:protein import"/>
    <property type="evidence" value="ECO:0007669"/>
    <property type="project" value="InterPro"/>
</dbReference>
<dbReference type="Gene3D" id="2.120.10.30">
    <property type="entry name" value="TolB, C-terminal domain"/>
    <property type="match status" value="1"/>
</dbReference>
<dbReference type="Gene3D" id="3.40.50.10070">
    <property type="entry name" value="TolB, N-terminal domain"/>
    <property type="match status" value="1"/>
</dbReference>
<dbReference type="HAMAP" id="MF_00671">
    <property type="entry name" value="TolB"/>
    <property type="match status" value="1"/>
</dbReference>
<dbReference type="InterPro" id="IPR011042">
    <property type="entry name" value="6-blade_b-propeller_TolB-like"/>
</dbReference>
<dbReference type="InterPro" id="IPR011659">
    <property type="entry name" value="PD40"/>
</dbReference>
<dbReference type="InterPro" id="IPR014167">
    <property type="entry name" value="Tol-Pal_TolB"/>
</dbReference>
<dbReference type="InterPro" id="IPR007195">
    <property type="entry name" value="TolB_N"/>
</dbReference>
<dbReference type="NCBIfam" id="TIGR02800">
    <property type="entry name" value="propeller_TolB"/>
    <property type="match status" value="1"/>
</dbReference>
<dbReference type="PANTHER" id="PTHR36842:SF1">
    <property type="entry name" value="PROTEIN TOLB"/>
    <property type="match status" value="1"/>
</dbReference>
<dbReference type="PANTHER" id="PTHR36842">
    <property type="entry name" value="PROTEIN TOLB HOMOLOG"/>
    <property type="match status" value="1"/>
</dbReference>
<dbReference type="Pfam" id="PF07676">
    <property type="entry name" value="PD40"/>
    <property type="match status" value="5"/>
</dbReference>
<dbReference type="Pfam" id="PF04052">
    <property type="entry name" value="TolB_N"/>
    <property type="match status" value="1"/>
</dbReference>
<dbReference type="SUPFAM" id="SSF52964">
    <property type="entry name" value="TolB, N-terminal domain"/>
    <property type="match status" value="1"/>
</dbReference>
<dbReference type="SUPFAM" id="SSF69304">
    <property type="entry name" value="Tricorn protease N-terminal domain"/>
    <property type="match status" value="1"/>
</dbReference>
<protein>
    <recommendedName>
        <fullName evidence="1">Tol-Pal system protein TolB</fullName>
    </recommendedName>
</protein>
<organism>
    <name type="scientific">Geobacter sulfurreducens (strain ATCC 51573 / DSM 12127 / PCA)</name>
    <dbReference type="NCBI Taxonomy" id="243231"/>
    <lineage>
        <taxon>Bacteria</taxon>
        <taxon>Pseudomonadati</taxon>
        <taxon>Thermodesulfobacteriota</taxon>
        <taxon>Desulfuromonadia</taxon>
        <taxon>Geobacterales</taxon>
        <taxon>Geobacteraceae</taxon>
        <taxon>Geobacter</taxon>
    </lineage>
</organism>
<proteinExistence type="inferred from homology"/>
<gene>
    <name evidence="1" type="primary">tolB</name>
    <name type="ordered locus">GSU0025</name>
</gene>
<reference key="1">
    <citation type="journal article" date="2003" name="Science">
        <title>Genome of Geobacter sulfurreducens: metal reduction in subsurface environments.</title>
        <authorList>
            <person name="Methe B.A."/>
            <person name="Nelson K.E."/>
            <person name="Eisen J.A."/>
            <person name="Paulsen I.T."/>
            <person name="Nelson W.C."/>
            <person name="Heidelberg J.F."/>
            <person name="Wu D."/>
            <person name="Wu M."/>
            <person name="Ward N.L."/>
            <person name="Beanan M.J."/>
            <person name="Dodson R.J."/>
            <person name="Madupu R."/>
            <person name="Brinkac L.M."/>
            <person name="Daugherty S.C."/>
            <person name="DeBoy R.T."/>
            <person name="Durkin A.S."/>
            <person name="Gwinn M.L."/>
            <person name="Kolonay J.F."/>
            <person name="Sullivan S.A."/>
            <person name="Haft D.H."/>
            <person name="Selengut J."/>
            <person name="Davidsen T.M."/>
            <person name="Zafar N."/>
            <person name="White O."/>
            <person name="Tran B."/>
            <person name="Romero C."/>
            <person name="Forberger H.A."/>
            <person name="Weidman J.F."/>
            <person name="Khouri H.M."/>
            <person name="Feldblyum T.V."/>
            <person name="Utterback T.R."/>
            <person name="Van Aken S.E."/>
            <person name="Lovley D.R."/>
            <person name="Fraser C.M."/>
        </authorList>
    </citation>
    <scope>NUCLEOTIDE SEQUENCE [LARGE SCALE GENOMIC DNA]</scope>
    <source>
        <strain>ATCC 51573 / DSM 12127 / PCA</strain>
    </source>
</reference>
<evidence type="ECO:0000255" key="1">
    <source>
        <dbReference type="HAMAP-Rule" id="MF_00671"/>
    </source>
</evidence>
<keyword id="KW-0131">Cell cycle</keyword>
<keyword id="KW-0132">Cell division</keyword>
<keyword id="KW-0574">Periplasm</keyword>
<keyword id="KW-1185">Reference proteome</keyword>
<keyword id="KW-0732">Signal</keyword>
<sequence>MKHVRIFATLLALLVISVTPAVIHSEDVYREVTASGAHNLTLAVDNPRNLGGADDAALARDVAEVLRFDMTLAGPFSVMAPPAGTSPGGIRPGEFDLDSWRNAGVDLLVKSGYTITGDSVTMEFRLYNATQGRELAAKRYTGKRSDLRRITHTFSDDIMQTMTGERGPFTGKIAFVSTESGNKEIYLMDYDGHNVQRLTKNRSINLNPDFSPNGRELAYTSYRRGNPDLFRREIFTGTEAVVSSHRGINVTGTWSPDGKQLALAMSRDGNSEIYAISRDGRDPRRLTTHQAIDVSPAWSPDGKRIAFVSDRLGKPQVFIMNADGSDVRRLTTSGAYNVSPRWSPKGDRLVYCRQEGGFQIYSIATDGTGDTRLTSEGSNEHPRWSPDGRFLTFSSTRDGGEAIYVMRSDGSGQTRVYRSKGKASHPTWSPRW</sequence>
<feature type="signal peptide" evidence="1">
    <location>
        <begin position="1"/>
        <end position="21"/>
    </location>
</feature>
<feature type="chain" id="PRO_0000034653" description="Tol-Pal system protein TolB" evidence="1">
    <location>
        <begin position="22"/>
        <end position="432"/>
    </location>
</feature>
<accession>Q74H67</accession>
<comment type="function">
    <text evidence="1">Part of the Tol-Pal system, which plays a role in outer membrane invagination during cell division and is important for maintaining outer membrane integrity.</text>
</comment>
<comment type="subunit">
    <text evidence="1">The Tol-Pal system is composed of five core proteins: the inner membrane proteins TolA, TolQ and TolR, the periplasmic protein TolB and the outer membrane protein Pal. They form a network linking the inner and outer membranes and the peptidoglycan layer.</text>
</comment>
<comment type="subcellular location">
    <subcellularLocation>
        <location evidence="1">Periplasm</location>
    </subcellularLocation>
</comment>
<comment type="similarity">
    <text evidence="1">Belongs to the TolB family.</text>
</comment>
<name>TOLB_GEOSL</name>